<evidence type="ECO:0000255" key="1">
    <source>
        <dbReference type="HAMAP-Rule" id="MF_00056"/>
    </source>
</evidence>
<name>KDSA_DECAR</name>
<feature type="chain" id="PRO_0000304446" description="2-dehydro-3-deoxyphosphooctonate aldolase">
    <location>
        <begin position="1"/>
        <end position="278"/>
    </location>
</feature>
<sequence length="278" mass="29843">MKLCGFEAGLDQPFFLIAGPCTAESEQLCLDVAGHMKEVCARLGINYIFKASYDKANRSSGKSVRGLGLEEGLRIFSEVQRQIGVPVLTDVHTIEDIPAVAAVVDVLQTPAFLCRQTDFIHAVATCGKPVNIKKGQFLAPGDMKNVVDKAREVNNGADNIMVCERGASFGYNNLVSDMRSLAIMRETGCPVVFDATHSVQLPGGQGTTSGGQREFVPVLARAAIAVGISGLFMETHPCPEKAWSDGPNSWPLDRMESLLATLVALDKAVKTAGFEELK</sequence>
<accession>Q47DI0</accession>
<keyword id="KW-0963">Cytoplasm</keyword>
<keyword id="KW-0448">Lipopolysaccharide biosynthesis</keyword>
<keyword id="KW-0808">Transferase</keyword>
<reference key="1">
    <citation type="journal article" date="2009" name="BMC Genomics">
        <title>Metabolic analysis of the soil microbe Dechloromonas aromatica str. RCB: indications of a surprisingly complex life-style and cryptic anaerobic pathways for aromatic degradation.</title>
        <authorList>
            <person name="Salinero K.K."/>
            <person name="Keller K."/>
            <person name="Feil W.S."/>
            <person name="Feil H."/>
            <person name="Trong S."/>
            <person name="Di Bartolo G."/>
            <person name="Lapidus A."/>
        </authorList>
    </citation>
    <scope>NUCLEOTIDE SEQUENCE [LARGE SCALE GENOMIC DNA]</scope>
    <source>
        <strain>RCB</strain>
    </source>
</reference>
<organism>
    <name type="scientific">Dechloromonas aromatica (strain RCB)</name>
    <dbReference type="NCBI Taxonomy" id="159087"/>
    <lineage>
        <taxon>Bacteria</taxon>
        <taxon>Pseudomonadati</taxon>
        <taxon>Pseudomonadota</taxon>
        <taxon>Betaproteobacteria</taxon>
        <taxon>Rhodocyclales</taxon>
        <taxon>Azonexaceae</taxon>
        <taxon>Dechloromonas</taxon>
    </lineage>
</organism>
<gene>
    <name evidence="1" type="primary">kdsA</name>
    <name type="ordered locus">Daro_2365</name>
</gene>
<comment type="catalytic activity">
    <reaction evidence="1">
        <text>D-arabinose 5-phosphate + phosphoenolpyruvate + H2O = 3-deoxy-alpha-D-manno-2-octulosonate-8-phosphate + phosphate</text>
        <dbReference type="Rhea" id="RHEA:14053"/>
        <dbReference type="ChEBI" id="CHEBI:15377"/>
        <dbReference type="ChEBI" id="CHEBI:43474"/>
        <dbReference type="ChEBI" id="CHEBI:57693"/>
        <dbReference type="ChEBI" id="CHEBI:58702"/>
        <dbReference type="ChEBI" id="CHEBI:85985"/>
        <dbReference type="EC" id="2.5.1.55"/>
    </reaction>
</comment>
<comment type="pathway">
    <text evidence="1">Carbohydrate biosynthesis; 3-deoxy-D-manno-octulosonate biosynthesis; 3-deoxy-D-manno-octulosonate from D-ribulose 5-phosphate: step 2/3.</text>
</comment>
<comment type="pathway">
    <text evidence="1">Bacterial outer membrane biogenesis; lipopolysaccharide biosynthesis.</text>
</comment>
<comment type="subcellular location">
    <subcellularLocation>
        <location evidence="1">Cytoplasm</location>
    </subcellularLocation>
</comment>
<comment type="similarity">
    <text evidence="1">Belongs to the KdsA family.</text>
</comment>
<protein>
    <recommendedName>
        <fullName evidence="1">2-dehydro-3-deoxyphosphooctonate aldolase</fullName>
        <ecNumber evidence="1">2.5.1.55</ecNumber>
    </recommendedName>
    <alternativeName>
        <fullName evidence="1">3-deoxy-D-manno-octulosonic acid 8-phosphate synthase</fullName>
    </alternativeName>
    <alternativeName>
        <fullName evidence="1">KDO-8-phosphate synthase</fullName>
        <shortName evidence="1">KDO 8-P synthase</shortName>
        <shortName evidence="1">KDOPS</shortName>
    </alternativeName>
    <alternativeName>
        <fullName evidence="1">Phospho-2-dehydro-3-deoxyoctonate aldolase</fullName>
    </alternativeName>
</protein>
<dbReference type="EC" id="2.5.1.55" evidence="1"/>
<dbReference type="EMBL" id="CP000089">
    <property type="protein sequence ID" value="AAZ47101.1"/>
    <property type="molecule type" value="Genomic_DNA"/>
</dbReference>
<dbReference type="SMR" id="Q47DI0"/>
<dbReference type="STRING" id="159087.Daro_2365"/>
<dbReference type="KEGG" id="dar:Daro_2365"/>
<dbReference type="eggNOG" id="COG2877">
    <property type="taxonomic scope" value="Bacteria"/>
</dbReference>
<dbReference type="HOGENOM" id="CLU_036666_0_0_4"/>
<dbReference type="OrthoDB" id="9776934at2"/>
<dbReference type="UniPathway" id="UPA00030"/>
<dbReference type="UniPathway" id="UPA00357">
    <property type="reaction ID" value="UER00474"/>
</dbReference>
<dbReference type="GO" id="GO:0005737">
    <property type="term" value="C:cytoplasm"/>
    <property type="evidence" value="ECO:0007669"/>
    <property type="project" value="UniProtKB-SubCell"/>
</dbReference>
<dbReference type="GO" id="GO:0008676">
    <property type="term" value="F:3-deoxy-8-phosphooctulonate synthase activity"/>
    <property type="evidence" value="ECO:0007669"/>
    <property type="project" value="UniProtKB-UniRule"/>
</dbReference>
<dbReference type="GO" id="GO:0019294">
    <property type="term" value="P:keto-3-deoxy-D-manno-octulosonic acid biosynthetic process"/>
    <property type="evidence" value="ECO:0007669"/>
    <property type="project" value="UniProtKB-UniRule"/>
</dbReference>
<dbReference type="Gene3D" id="3.20.20.70">
    <property type="entry name" value="Aldolase class I"/>
    <property type="match status" value="1"/>
</dbReference>
<dbReference type="HAMAP" id="MF_00056">
    <property type="entry name" value="KDO8P_synth"/>
    <property type="match status" value="1"/>
</dbReference>
<dbReference type="InterPro" id="IPR013785">
    <property type="entry name" value="Aldolase_TIM"/>
</dbReference>
<dbReference type="InterPro" id="IPR006218">
    <property type="entry name" value="DAHP1/KDSA"/>
</dbReference>
<dbReference type="InterPro" id="IPR006269">
    <property type="entry name" value="KDO8P_synthase"/>
</dbReference>
<dbReference type="NCBIfam" id="TIGR01362">
    <property type="entry name" value="KDO8P_synth"/>
    <property type="match status" value="1"/>
</dbReference>
<dbReference type="NCBIfam" id="NF003543">
    <property type="entry name" value="PRK05198.1"/>
    <property type="match status" value="1"/>
</dbReference>
<dbReference type="PANTHER" id="PTHR21057">
    <property type="entry name" value="PHOSPHO-2-DEHYDRO-3-DEOXYHEPTONATE ALDOLASE"/>
    <property type="match status" value="1"/>
</dbReference>
<dbReference type="Pfam" id="PF00793">
    <property type="entry name" value="DAHP_synth_1"/>
    <property type="match status" value="1"/>
</dbReference>
<dbReference type="SUPFAM" id="SSF51569">
    <property type="entry name" value="Aldolase"/>
    <property type="match status" value="1"/>
</dbReference>
<proteinExistence type="inferred from homology"/>